<feature type="chain" id="PRO_0000173773" description="Formimidoylglutamase">
    <location>
        <begin position="1"/>
        <end position="311"/>
    </location>
</feature>
<feature type="binding site" evidence="1">
    <location>
        <position position="130"/>
    </location>
    <ligand>
        <name>Mn(2+)</name>
        <dbReference type="ChEBI" id="CHEBI:29035"/>
        <label>1</label>
    </ligand>
</feature>
<feature type="binding site" evidence="1">
    <location>
        <position position="155"/>
    </location>
    <ligand>
        <name>Mn(2+)</name>
        <dbReference type="ChEBI" id="CHEBI:29035"/>
        <label>1</label>
    </ligand>
</feature>
<feature type="binding site" evidence="1">
    <location>
        <position position="155"/>
    </location>
    <ligand>
        <name>Mn(2+)</name>
        <dbReference type="ChEBI" id="CHEBI:29035"/>
        <label>2</label>
    </ligand>
</feature>
<feature type="binding site" evidence="1">
    <location>
        <position position="157"/>
    </location>
    <ligand>
        <name>Mn(2+)</name>
        <dbReference type="ChEBI" id="CHEBI:29035"/>
        <label>2</label>
    </ligand>
</feature>
<feature type="binding site" evidence="1">
    <location>
        <position position="159"/>
    </location>
    <ligand>
        <name>Mn(2+)</name>
        <dbReference type="ChEBI" id="CHEBI:29035"/>
        <label>1</label>
    </ligand>
</feature>
<feature type="binding site" evidence="1">
    <location>
        <position position="242"/>
    </location>
    <ligand>
        <name>Mn(2+)</name>
        <dbReference type="ChEBI" id="CHEBI:29035"/>
        <label>1</label>
    </ligand>
</feature>
<feature type="binding site" evidence="1">
    <location>
        <position position="242"/>
    </location>
    <ligand>
        <name>Mn(2+)</name>
        <dbReference type="ChEBI" id="CHEBI:29035"/>
        <label>2</label>
    </ligand>
</feature>
<feature type="binding site" evidence="1">
    <location>
        <position position="244"/>
    </location>
    <ligand>
        <name>Mn(2+)</name>
        <dbReference type="ChEBI" id="CHEBI:29035"/>
        <label>2</label>
    </ligand>
</feature>
<evidence type="ECO:0000255" key="1">
    <source>
        <dbReference type="HAMAP-Rule" id="MF_00737"/>
    </source>
</evidence>
<organism>
    <name type="scientific">Staphylococcus epidermidis (strain ATCC 35984 / DSM 28319 / BCRC 17069 / CCUG 31568 / BM 3577 / RP62A)</name>
    <dbReference type="NCBI Taxonomy" id="176279"/>
    <lineage>
        <taxon>Bacteria</taxon>
        <taxon>Bacillati</taxon>
        <taxon>Bacillota</taxon>
        <taxon>Bacilli</taxon>
        <taxon>Bacillales</taxon>
        <taxon>Staphylococcaceae</taxon>
        <taxon>Staphylococcus</taxon>
    </lineage>
</organism>
<sequence length="311" mass="34720">MYQLAQSNLWTGRLDSETDPTQFRHFQTVKFGDLSQLDFSDEHKGVGLLGYAIDKGVELNKGRVGAKEGPNAIKRAFAGLPDLNQCEEIIDYGNVEHNHELLIDTQREFADLAAKSIKRHKQTFLLGGGHDIAYAQYLATRKVYPESSIGVINIDAHFDTRDEGYSTSGTSFRQILEEDDNADYLVLGISQGGNTQALFNYAKEKDIQFVYADELLHQVSPPIKDMIERFIHNHDTVMFTICMDVVDSAFAPGVSAPAVLGIYPHTVFELAKRVIPSEKVKSISIAEMNPTYDSDQRTAKLVANLVHHCLI</sequence>
<reference key="1">
    <citation type="journal article" date="2005" name="J. Bacteriol.">
        <title>Insights on evolution of virulence and resistance from the complete genome analysis of an early methicillin-resistant Staphylococcus aureus strain and a biofilm-producing methicillin-resistant Staphylococcus epidermidis strain.</title>
        <authorList>
            <person name="Gill S.R."/>
            <person name="Fouts D.E."/>
            <person name="Archer G.L."/>
            <person name="Mongodin E.F."/>
            <person name="DeBoy R.T."/>
            <person name="Ravel J."/>
            <person name="Paulsen I.T."/>
            <person name="Kolonay J.F."/>
            <person name="Brinkac L.M."/>
            <person name="Beanan M.J."/>
            <person name="Dodson R.J."/>
            <person name="Daugherty S.C."/>
            <person name="Madupu R."/>
            <person name="Angiuoli S.V."/>
            <person name="Durkin A.S."/>
            <person name="Haft D.H."/>
            <person name="Vamathevan J.J."/>
            <person name="Khouri H."/>
            <person name="Utterback T.R."/>
            <person name="Lee C."/>
            <person name="Dimitrov G."/>
            <person name="Jiang L."/>
            <person name="Qin H."/>
            <person name="Weidman J."/>
            <person name="Tran K."/>
            <person name="Kang K.H."/>
            <person name="Hance I.R."/>
            <person name="Nelson K.E."/>
            <person name="Fraser C.M."/>
        </authorList>
    </citation>
    <scope>NUCLEOTIDE SEQUENCE [LARGE SCALE GENOMIC DNA]</scope>
    <source>
        <strain>ATCC 35984 / DSM 28319 / BCRC 17069 / CCUG 31568 / BM 3577 / RP62A</strain>
    </source>
</reference>
<name>HUTG_STAEQ</name>
<keyword id="KW-0369">Histidine metabolism</keyword>
<keyword id="KW-0378">Hydrolase</keyword>
<keyword id="KW-0464">Manganese</keyword>
<keyword id="KW-0479">Metal-binding</keyword>
<keyword id="KW-1185">Reference proteome</keyword>
<protein>
    <recommendedName>
        <fullName evidence="1">Formimidoylglutamase</fullName>
        <ecNumber evidence="1">3.5.3.8</ecNumber>
    </recommendedName>
    <alternativeName>
        <fullName evidence="1">Formiminoglutamase</fullName>
    </alternativeName>
    <alternativeName>
        <fullName evidence="1">Formiminoglutamate hydrolase</fullName>
    </alternativeName>
</protein>
<proteinExistence type="inferred from homology"/>
<comment type="function">
    <text evidence="1">Catalyzes the conversion of N-formimidoyl-L-glutamate to L-glutamate and formamide.</text>
</comment>
<comment type="catalytic activity">
    <reaction evidence="1">
        <text>N-formimidoyl-L-glutamate + H2O = formamide + L-glutamate</text>
        <dbReference type="Rhea" id="RHEA:22492"/>
        <dbReference type="ChEBI" id="CHEBI:15377"/>
        <dbReference type="ChEBI" id="CHEBI:16397"/>
        <dbReference type="ChEBI" id="CHEBI:29985"/>
        <dbReference type="ChEBI" id="CHEBI:58928"/>
        <dbReference type="EC" id="3.5.3.8"/>
    </reaction>
</comment>
<comment type="cofactor">
    <cofactor evidence="1">
        <name>Mn(2+)</name>
        <dbReference type="ChEBI" id="CHEBI:29035"/>
    </cofactor>
    <text evidence="1">Binds 2 manganese ions per subunit.</text>
</comment>
<comment type="pathway">
    <text evidence="1">Amino-acid degradation; L-histidine degradation into L-glutamate; L-glutamate from N-formimidoyl-L-glutamate (hydrolase route): step 1/1.</text>
</comment>
<comment type="similarity">
    <text evidence="1">Belongs to the arginase family.</text>
</comment>
<accession>Q5HLR4</accession>
<gene>
    <name evidence="1" type="primary">hutG</name>
    <name type="ordered locus">SERP1919</name>
</gene>
<dbReference type="EC" id="3.5.3.8" evidence="1"/>
<dbReference type="EMBL" id="CP000029">
    <property type="protein sequence ID" value="AAW55253.1"/>
    <property type="molecule type" value="Genomic_DNA"/>
</dbReference>
<dbReference type="RefSeq" id="WP_001831441.1">
    <property type="nucleotide sequence ID" value="NC_002976.3"/>
</dbReference>
<dbReference type="SMR" id="Q5HLR4"/>
<dbReference type="STRING" id="176279.SERP1919"/>
<dbReference type="GeneID" id="50017990"/>
<dbReference type="KEGG" id="ser:SERP1919"/>
<dbReference type="eggNOG" id="COG0010">
    <property type="taxonomic scope" value="Bacteria"/>
</dbReference>
<dbReference type="HOGENOM" id="CLU_039478_2_0_9"/>
<dbReference type="UniPathway" id="UPA00379">
    <property type="reaction ID" value="UER00552"/>
</dbReference>
<dbReference type="Proteomes" id="UP000000531">
    <property type="component" value="Chromosome"/>
</dbReference>
<dbReference type="GO" id="GO:0008783">
    <property type="term" value="F:agmatinase activity"/>
    <property type="evidence" value="ECO:0007669"/>
    <property type="project" value="TreeGrafter"/>
</dbReference>
<dbReference type="GO" id="GO:0050415">
    <property type="term" value="F:formimidoylglutamase activity"/>
    <property type="evidence" value="ECO:0007669"/>
    <property type="project" value="UniProtKB-UniRule"/>
</dbReference>
<dbReference type="GO" id="GO:0030145">
    <property type="term" value="F:manganese ion binding"/>
    <property type="evidence" value="ECO:0007669"/>
    <property type="project" value="UniProtKB-UniRule"/>
</dbReference>
<dbReference type="GO" id="GO:0019556">
    <property type="term" value="P:L-histidine catabolic process to glutamate and formamide"/>
    <property type="evidence" value="ECO:0007669"/>
    <property type="project" value="UniProtKB-UniPathway"/>
</dbReference>
<dbReference type="GO" id="GO:0019557">
    <property type="term" value="P:L-histidine catabolic process to glutamate and formate"/>
    <property type="evidence" value="ECO:0007669"/>
    <property type="project" value="UniProtKB-UniPathway"/>
</dbReference>
<dbReference type="GO" id="GO:0033389">
    <property type="term" value="P:putrescine biosynthetic process from arginine, via agmatine"/>
    <property type="evidence" value="ECO:0007669"/>
    <property type="project" value="TreeGrafter"/>
</dbReference>
<dbReference type="CDD" id="cd09988">
    <property type="entry name" value="Formimidoylglutamase"/>
    <property type="match status" value="1"/>
</dbReference>
<dbReference type="Gene3D" id="3.40.800.10">
    <property type="entry name" value="Ureohydrolase domain"/>
    <property type="match status" value="1"/>
</dbReference>
<dbReference type="HAMAP" id="MF_00737">
    <property type="entry name" value="Formimidoylglutam"/>
    <property type="match status" value="1"/>
</dbReference>
<dbReference type="InterPro" id="IPR005923">
    <property type="entry name" value="HutG"/>
</dbReference>
<dbReference type="InterPro" id="IPR006035">
    <property type="entry name" value="Ureohydrolase"/>
</dbReference>
<dbReference type="InterPro" id="IPR023696">
    <property type="entry name" value="Ureohydrolase_dom_sf"/>
</dbReference>
<dbReference type="NCBIfam" id="TIGR01227">
    <property type="entry name" value="hutG"/>
    <property type="match status" value="1"/>
</dbReference>
<dbReference type="PANTHER" id="PTHR11358">
    <property type="entry name" value="ARGINASE/AGMATINASE"/>
    <property type="match status" value="1"/>
</dbReference>
<dbReference type="PANTHER" id="PTHR11358:SF35">
    <property type="entry name" value="FORMIMIDOYLGLUTAMASE"/>
    <property type="match status" value="1"/>
</dbReference>
<dbReference type="Pfam" id="PF00491">
    <property type="entry name" value="Arginase"/>
    <property type="match status" value="1"/>
</dbReference>
<dbReference type="PIRSF" id="PIRSF036979">
    <property type="entry name" value="Arginase"/>
    <property type="match status" value="1"/>
</dbReference>
<dbReference type="SUPFAM" id="SSF52768">
    <property type="entry name" value="Arginase/deacetylase"/>
    <property type="match status" value="1"/>
</dbReference>
<dbReference type="PROSITE" id="PS51409">
    <property type="entry name" value="ARGINASE_2"/>
    <property type="match status" value="1"/>
</dbReference>